<gene>
    <name evidence="1" type="primary">murE</name>
    <name type="ordered locus">RF_0368</name>
</gene>
<comment type="function">
    <text evidence="1">Catalyzes the addition of meso-diaminopimelic acid to the nucleotide precursor UDP-N-acetylmuramoyl-L-alanyl-D-glutamate (UMAG) in the biosynthesis of bacterial cell-wall peptidoglycan.</text>
</comment>
<comment type="catalytic activity">
    <reaction evidence="1">
        <text>UDP-N-acetyl-alpha-D-muramoyl-L-alanyl-D-glutamate + meso-2,6-diaminopimelate + ATP = UDP-N-acetyl-alpha-D-muramoyl-L-alanyl-gamma-D-glutamyl-meso-2,6-diaminopimelate + ADP + phosphate + H(+)</text>
        <dbReference type="Rhea" id="RHEA:23676"/>
        <dbReference type="ChEBI" id="CHEBI:15378"/>
        <dbReference type="ChEBI" id="CHEBI:30616"/>
        <dbReference type="ChEBI" id="CHEBI:43474"/>
        <dbReference type="ChEBI" id="CHEBI:57791"/>
        <dbReference type="ChEBI" id="CHEBI:83900"/>
        <dbReference type="ChEBI" id="CHEBI:83905"/>
        <dbReference type="ChEBI" id="CHEBI:456216"/>
        <dbReference type="EC" id="6.3.2.13"/>
    </reaction>
</comment>
<comment type="cofactor">
    <cofactor evidence="1">
        <name>Mg(2+)</name>
        <dbReference type="ChEBI" id="CHEBI:18420"/>
    </cofactor>
</comment>
<comment type="pathway">
    <text evidence="1">Cell wall biogenesis; peptidoglycan biosynthesis.</text>
</comment>
<comment type="subcellular location">
    <subcellularLocation>
        <location evidence="1">Cytoplasm</location>
    </subcellularLocation>
</comment>
<comment type="PTM">
    <text evidence="1">Carboxylation is probably crucial for Mg(2+) binding and, consequently, for the gamma-phosphate positioning of ATP.</text>
</comment>
<comment type="similarity">
    <text evidence="1">Belongs to the MurCDEF family. MurE subfamily.</text>
</comment>
<feature type="chain" id="PRO_0000278039" description="UDP-N-acetylmuramoyl-L-alanyl-D-glutamate--2,6-diaminopimelate ligase">
    <location>
        <begin position="1"/>
        <end position="530"/>
    </location>
</feature>
<feature type="domain" description="RPE1 insert">
    <location>
        <begin position="221"/>
        <end position="269"/>
    </location>
</feature>
<feature type="short sequence motif" description="Meso-diaminopimelate recognition motif">
    <location>
        <begin position="446"/>
        <end position="449"/>
    </location>
</feature>
<feature type="binding site" evidence="1">
    <location>
        <position position="21"/>
    </location>
    <ligand>
        <name>UDP-N-acetyl-alpha-D-muramoyl-L-alanyl-D-glutamate</name>
        <dbReference type="ChEBI" id="CHEBI:83900"/>
    </ligand>
</feature>
<feature type="binding site" evidence="1">
    <location>
        <begin position="99"/>
        <end position="105"/>
    </location>
    <ligand>
        <name>ATP</name>
        <dbReference type="ChEBI" id="CHEBI:30616"/>
    </ligand>
</feature>
<feature type="binding site" evidence="1">
    <location>
        <begin position="145"/>
        <end position="146"/>
    </location>
    <ligand>
        <name>UDP-N-acetyl-alpha-D-muramoyl-L-alanyl-D-glutamate</name>
        <dbReference type="ChEBI" id="CHEBI:83900"/>
    </ligand>
</feature>
<feature type="binding site" evidence="1">
    <location>
        <position position="172"/>
    </location>
    <ligand>
        <name>UDP-N-acetyl-alpha-D-muramoyl-L-alanyl-D-glutamate</name>
        <dbReference type="ChEBI" id="CHEBI:83900"/>
    </ligand>
</feature>
<feature type="binding site" evidence="1">
    <location>
        <position position="178"/>
    </location>
    <ligand>
        <name>UDP-N-acetyl-alpha-D-muramoyl-L-alanyl-D-glutamate</name>
        <dbReference type="ChEBI" id="CHEBI:83900"/>
    </ligand>
</feature>
<feature type="binding site" evidence="1">
    <location>
        <position position="180"/>
    </location>
    <ligand>
        <name>UDP-N-acetyl-alpha-D-muramoyl-L-alanyl-D-glutamate</name>
        <dbReference type="ChEBI" id="CHEBI:83900"/>
    </ligand>
</feature>
<feature type="binding site" evidence="1">
    <location>
        <position position="422"/>
    </location>
    <ligand>
        <name>meso-2,6-diaminopimelate</name>
        <dbReference type="ChEBI" id="CHEBI:57791"/>
    </ligand>
</feature>
<feature type="binding site" evidence="1">
    <location>
        <begin position="446"/>
        <end position="449"/>
    </location>
    <ligand>
        <name>meso-2,6-diaminopimelate</name>
        <dbReference type="ChEBI" id="CHEBI:57791"/>
    </ligand>
</feature>
<feature type="binding site" evidence="1">
    <location>
        <position position="496"/>
    </location>
    <ligand>
        <name>meso-2,6-diaminopimelate</name>
        <dbReference type="ChEBI" id="CHEBI:57791"/>
    </ligand>
</feature>
<feature type="binding site" evidence="1">
    <location>
        <position position="500"/>
    </location>
    <ligand>
        <name>meso-2,6-diaminopimelate</name>
        <dbReference type="ChEBI" id="CHEBI:57791"/>
    </ligand>
</feature>
<feature type="modified residue" description="N6-carboxylysine" evidence="1">
    <location>
        <position position="212"/>
    </location>
</feature>
<reference key="1">
    <citation type="journal article" date="2005" name="PLoS Biol.">
        <title>The genome sequence of Rickettsia felis identifies the first putative conjugative plasmid in an obligate intracellular parasite.</title>
        <authorList>
            <person name="Ogata H."/>
            <person name="Renesto P."/>
            <person name="Audic S."/>
            <person name="Robert C."/>
            <person name="Blanc G."/>
            <person name="Fournier P.-E."/>
            <person name="Parinello H."/>
            <person name="Claverie J.-M."/>
            <person name="Raoult D."/>
        </authorList>
    </citation>
    <scope>NUCLEOTIDE SEQUENCE [LARGE SCALE GENOMIC DNA]</scope>
    <source>
        <strain>ATCC VR-1525 / URRWXCal2</strain>
    </source>
</reference>
<keyword id="KW-0067">ATP-binding</keyword>
<keyword id="KW-0131">Cell cycle</keyword>
<keyword id="KW-0132">Cell division</keyword>
<keyword id="KW-0133">Cell shape</keyword>
<keyword id="KW-0961">Cell wall biogenesis/degradation</keyword>
<keyword id="KW-0963">Cytoplasm</keyword>
<keyword id="KW-0436">Ligase</keyword>
<keyword id="KW-0460">Magnesium</keyword>
<keyword id="KW-0547">Nucleotide-binding</keyword>
<keyword id="KW-0573">Peptidoglycan synthesis</keyword>
<protein>
    <recommendedName>
        <fullName evidence="1">UDP-N-acetylmuramoyl-L-alanyl-D-glutamate--2,6-diaminopimelate ligase</fullName>
        <ecNumber evidence="1">6.3.2.13</ecNumber>
    </recommendedName>
    <alternativeName>
        <fullName evidence="1">Meso-A2pm-adding enzyme</fullName>
    </alternativeName>
    <alternativeName>
        <fullName evidence="1">Meso-diaminopimelate-adding enzyme</fullName>
    </alternativeName>
    <alternativeName>
        <fullName evidence="1">UDP-MurNAc-L-Ala-D-Glu:meso-diaminopimelate ligase</fullName>
    </alternativeName>
    <alternativeName>
        <fullName evidence="1">UDP-MurNAc-tripeptide synthetase</fullName>
    </alternativeName>
    <alternativeName>
        <fullName evidence="1">UDP-N-acetylmuramyl-tripeptide synthetase</fullName>
    </alternativeName>
</protein>
<evidence type="ECO:0000255" key="1">
    <source>
        <dbReference type="HAMAP-Rule" id="MF_00208"/>
    </source>
</evidence>
<dbReference type="EC" id="6.3.2.13" evidence="1"/>
<dbReference type="EMBL" id="CP000053">
    <property type="protein sequence ID" value="AAY61219.1"/>
    <property type="molecule type" value="Genomic_DNA"/>
</dbReference>
<dbReference type="SMR" id="Q4UMI9"/>
<dbReference type="STRING" id="315456.RF_0368"/>
<dbReference type="KEGG" id="rfe:RF_0368"/>
<dbReference type="eggNOG" id="COG0769">
    <property type="taxonomic scope" value="Bacteria"/>
</dbReference>
<dbReference type="HOGENOM" id="CLU_022291_3_1_5"/>
<dbReference type="OrthoDB" id="9800958at2"/>
<dbReference type="UniPathway" id="UPA00219"/>
<dbReference type="Proteomes" id="UP000008548">
    <property type="component" value="Chromosome"/>
</dbReference>
<dbReference type="GO" id="GO:0005737">
    <property type="term" value="C:cytoplasm"/>
    <property type="evidence" value="ECO:0007669"/>
    <property type="project" value="UniProtKB-SubCell"/>
</dbReference>
<dbReference type="GO" id="GO:0005524">
    <property type="term" value="F:ATP binding"/>
    <property type="evidence" value="ECO:0007669"/>
    <property type="project" value="UniProtKB-UniRule"/>
</dbReference>
<dbReference type="GO" id="GO:0000287">
    <property type="term" value="F:magnesium ion binding"/>
    <property type="evidence" value="ECO:0007669"/>
    <property type="project" value="UniProtKB-UniRule"/>
</dbReference>
<dbReference type="GO" id="GO:0008765">
    <property type="term" value="F:UDP-N-acetylmuramoylalanyl-D-glutamate-2,6-diaminopimelate ligase activity"/>
    <property type="evidence" value="ECO:0007669"/>
    <property type="project" value="UniProtKB-UniRule"/>
</dbReference>
<dbReference type="GO" id="GO:0051301">
    <property type="term" value="P:cell division"/>
    <property type="evidence" value="ECO:0007669"/>
    <property type="project" value="UniProtKB-KW"/>
</dbReference>
<dbReference type="GO" id="GO:0071555">
    <property type="term" value="P:cell wall organization"/>
    <property type="evidence" value="ECO:0007669"/>
    <property type="project" value="UniProtKB-KW"/>
</dbReference>
<dbReference type="GO" id="GO:0009252">
    <property type="term" value="P:peptidoglycan biosynthetic process"/>
    <property type="evidence" value="ECO:0007669"/>
    <property type="project" value="UniProtKB-UniRule"/>
</dbReference>
<dbReference type="GO" id="GO:0008360">
    <property type="term" value="P:regulation of cell shape"/>
    <property type="evidence" value="ECO:0007669"/>
    <property type="project" value="UniProtKB-KW"/>
</dbReference>
<dbReference type="Gene3D" id="3.90.190.20">
    <property type="entry name" value="Mur ligase, C-terminal domain"/>
    <property type="match status" value="1"/>
</dbReference>
<dbReference type="Gene3D" id="3.40.1190.10">
    <property type="entry name" value="Mur-like, catalytic domain"/>
    <property type="match status" value="1"/>
</dbReference>
<dbReference type="Gene3D" id="3.40.1390.10">
    <property type="entry name" value="MurE/MurF, N-terminal domain"/>
    <property type="match status" value="1"/>
</dbReference>
<dbReference type="HAMAP" id="MF_00208">
    <property type="entry name" value="MurE"/>
    <property type="match status" value="1"/>
</dbReference>
<dbReference type="InterPro" id="IPR036565">
    <property type="entry name" value="Mur-like_cat_sf"/>
</dbReference>
<dbReference type="InterPro" id="IPR004101">
    <property type="entry name" value="Mur_ligase_C"/>
</dbReference>
<dbReference type="InterPro" id="IPR036615">
    <property type="entry name" value="Mur_ligase_C_dom_sf"/>
</dbReference>
<dbReference type="InterPro" id="IPR013221">
    <property type="entry name" value="Mur_ligase_cen"/>
</dbReference>
<dbReference type="InterPro" id="IPR000713">
    <property type="entry name" value="Mur_ligase_N"/>
</dbReference>
<dbReference type="InterPro" id="IPR035911">
    <property type="entry name" value="MurE/MurF_N"/>
</dbReference>
<dbReference type="InterPro" id="IPR005728">
    <property type="entry name" value="RPE1"/>
</dbReference>
<dbReference type="InterPro" id="IPR005761">
    <property type="entry name" value="UDP-N-AcMur-Glu-dNH2Pim_ligase"/>
</dbReference>
<dbReference type="NCBIfam" id="TIGR01085">
    <property type="entry name" value="murE"/>
    <property type="match status" value="1"/>
</dbReference>
<dbReference type="NCBIfam" id="NF001124">
    <property type="entry name" value="PRK00139.1-2"/>
    <property type="match status" value="1"/>
</dbReference>
<dbReference type="NCBIfam" id="NF001126">
    <property type="entry name" value="PRK00139.1-4"/>
    <property type="match status" value="1"/>
</dbReference>
<dbReference type="NCBIfam" id="TIGR01045">
    <property type="entry name" value="RPE1"/>
    <property type="match status" value="1"/>
</dbReference>
<dbReference type="PANTHER" id="PTHR23135">
    <property type="entry name" value="MUR LIGASE FAMILY MEMBER"/>
    <property type="match status" value="1"/>
</dbReference>
<dbReference type="PANTHER" id="PTHR23135:SF4">
    <property type="entry name" value="UDP-N-ACETYLMURAMOYL-L-ALANYL-D-GLUTAMATE--2,6-DIAMINOPIMELATE LIGASE MURE HOMOLOG, CHLOROPLASTIC"/>
    <property type="match status" value="1"/>
</dbReference>
<dbReference type="Pfam" id="PF01225">
    <property type="entry name" value="Mur_ligase"/>
    <property type="match status" value="1"/>
</dbReference>
<dbReference type="Pfam" id="PF02875">
    <property type="entry name" value="Mur_ligase_C"/>
    <property type="match status" value="1"/>
</dbReference>
<dbReference type="Pfam" id="PF08245">
    <property type="entry name" value="Mur_ligase_M"/>
    <property type="match status" value="2"/>
</dbReference>
<dbReference type="SUPFAM" id="SSF53623">
    <property type="entry name" value="MurD-like peptide ligases, catalytic domain"/>
    <property type="match status" value="2"/>
</dbReference>
<dbReference type="SUPFAM" id="SSF53244">
    <property type="entry name" value="MurD-like peptide ligases, peptide-binding domain"/>
    <property type="match status" value="1"/>
</dbReference>
<dbReference type="SUPFAM" id="SSF63418">
    <property type="entry name" value="MurE/MurF N-terminal domain"/>
    <property type="match status" value="1"/>
</dbReference>
<organism>
    <name type="scientific">Rickettsia felis (strain ATCC VR-1525 / URRWXCal2)</name>
    <name type="common">Rickettsia azadi</name>
    <dbReference type="NCBI Taxonomy" id="315456"/>
    <lineage>
        <taxon>Bacteria</taxon>
        <taxon>Pseudomonadati</taxon>
        <taxon>Pseudomonadota</taxon>
        <taxon>Alphaproteobacteria</taxon>
        <taxon>Rickettsiales</taxon>
        <taxon>Rickettsiaceae</taxon>
        <taxon>Rickettsieae</taxon>
        <taxon>Rickettsia</taxon>
        <taxon>spotted fever group</taxon>
    </lineage>
</organism>
<accession>Q4UMI9</accession>
<name>MURE_RICFE</name>
<proteinExistence type="inferred from homology"/>
<sequence length="530" mass="59450">MPYNLKQLFQKHNVKGLSINSKTVKENDIFFAIKGQNVDGNDFINEVLNQAVALVITDNKKNTIIDDKVIYVEDVQVALYEAIEIFYPKKPKNLIAVTGTNGKSSVVSYIAQTYSLLGKKAASIGTIGVEIFGCDNLINDVPELTTLDYLSFRKIAHNLAENNIEYLAFEASSHGLNQARLGEIKVNTACFTSFSQDHLDYHHTKENYLLAKLKLFTRHLFKPAYREEFKGDTEHSTTAYILVREDASTGSTSKLLLEAKFGKMSTEYLLQGGLAILNSDIAEIEFVKDYLRNHNIKFITVGKKGDVQITKINGSLKAQNINFIFNNRECSFNTSIIGSFQASNLLIAALSIHYIGFDFNKIIEILTQVKPVKGRMERIGNTNIFVDYSHTPDALEKALTELKNVKLRDSRLNVVFGCGGNRDKTKRSLMGQIAARLADNVIITDDNPRHEDPKLIRAEIISGIEKADYTEIANREEAIKYGINNLKQDDILLIAGKGHENYQIIGDKKLPFDDAEIVRKLMSLRGKAKP</sequence>